<organism>
    <name type="scientific">Verminephrobacter eiseniae (strain EF01-2)</name>
    <dbReference type="NCBI Taxonomy" id="391735"/>
    <lineage>
        <taxon>Bacteria</taxon>
        <taxon>Pseudomonadati</taxon>
        <taxon>Pseudomonadota</taxon>
        <taxon>Betaproteobacteria</taxon>
        <taxon>Burkholderiales</taxon>
        <taxon>Comamonadaceae</taxon>
        <taxon>Verminephrobacter</taxon>
    </lineage>
</organism>
<name>LPXB_VEREI</name>
<gene>
    <name evidence="1" type="primary">lpxB</name>
    <name type="ordered locus">Veis_1451</name>
</gene>
<feature type="chain" id="PRO_1000049424" description="Lipid-A-disaccharide synthase">
    <location>
        <begin position="1"/>
        <end position="389"/>
    </location>
</feature>
<accession>A1WHV5</accession>
<comment type="function">
    <text evidence="1">Condensation of UDP-2,3-diacylglucosamine and 2,3-diacylglucosamine-1-phosphate to form lipid A disaccharide, a precursor of lipid A, a phosphorylated glycolipid that anchors the lipopolysaccharide to the outer membrane of the cell.</text>
</comment>
<comment type="catalytic activity">
    <reaction evidence="1">
        <text>a lipid X + a UDP-2-N,3-O-bis[(3R)-3-hydroxyacyl]-alpha-D-glucosamine = a lipid A disaccharide + UDP + H(+)</text>
        <dbReference type="Rhea" id="RHEA:67828"/>
        <dbReference type="ChEBI" id="CHEBI:15378"/>
        <dbReference type="ChEBI" id="CHEBI:58223"/>
        <dbReference type="ChEBI" id="CHEBI:137748"/>
        <dbReference type="ChEBI" id="CHEBI:176338"/>
        <dbReference type="ChEBI" id="CHEBI:176343"/>
        <dbReference type="EC" id="2.4.1.182"/>
    </reaction>
</comment>
<comment type="pathway">
    <text evidence="1">Bacterial outer membrane biogenesis; LPS lipid A biosynthesis.</text>
</comment>
<comment type="similarity">
    <text evidence="1">Belongs to the LpxB family.</text>
</comment>
<evidence type="ECO:0000255" key="1">
    <source>
        <dbReference type="HAMAP-Rule" id="MF_00392"/>
    </source>
</evidence>
<reference key="1">
    <citation type="submission" date="2006-12" db="EMBL/GenBank/DDBJ databases">
        <title>Complete sequence of chromosome 1 of Verminephrobacter eiseniae EF01-2.</title>
        <authorList>
            <person name="Copeland A."/>
            <person name="Lucas S."/>
            <person name="Lapidus A."/>
            <person name="Barry K."/>
            <person name="Detter J.C."/>
            <person name="Glavina del Rio T."/>
            <person name="Dalin E."/>
            <person name="Tice H."/>
            <person name="Pitluck S."/>
            <person name="Chertkov O."/>
            <person name="Brettin T."/>
            <person name="Bruce D."/>
            <person name="Han C."/>
            <person name="Tapia R."/>
            <person name="Gilna P."/>
            <person name="Schmutz J."/>
            <person name="Larimer F."/>
            <person name="Land M."/>
            <person name="Hauser L."/>
            <person name="Kyrpides N."/>
            <person name="Kim E."/>
            <person name="Stahl D."/>
            <person name="Richardson P."/>
        </authorList>
    </citation>
    <scope>NUCLEOTIDE SEQUENCE [LARGE SCALE GENOMIC DNA]</scope>
    <source>
        <strain>EF01-2</strain>
    </source>
</reference>
<keyword id="KW-0328">Glycosyltransferase</keyword>
<keyword id="KW-0441">Lipid A biosynthesis</keyword>
<keyword id="KW-0444">Lipid biosynthesis</keyword>
<keyword id="KW-0443">Lipid metabolism</keyword>
<keyword id="KW-1185">Reference proteome</keyword>
<keyword id="KW-0808">Transferase</keyword>
<dbReference type="EC" id="2.4.1.182" evidence="1"/>
<dbReference type="EMBL" id="CP000542">
    <property type="protein sequence ID" value="ABM57212.1"/>
    <property type="molecule type" value="Genomic_DNA"/>
</dbReference>
<dbReference type="SMR" id="A1WHV5"/>
<dbReference type="STRING" id="391735.Veis_1451"/>
<dbReference type="CAZy" id="GT19">
    <property type="family name" value="Glycosyltransferase Family 19"/>
</dbReference>
<dbReference type="KEGG" id="vei:Veis_1451"/>
<dbReference type="eggNOG" id="COG0763">
    <property type="taxonomic scope" value="Bacteria"/>
</dbReference>
<dbReference type="HOGENOM" id="CLU_036577_3_0_4"/>
<dbReference type="UniPathway" id="UPA00973"/>
<dbReference type="Proteomes" id="UP000000374">
    <property type="component" value="Chromosome"/>
</dbReference>
<dbReference type="GO" id="GO:0016020">
    <property type="term" value="C:membrane"/>
    <property type="evidence" value="ECO:0007669"/>
    <property type="project" value="GOC"/>
</dbReference>
<dbReference type="GO" id="GO:0008915">
    <property type="term" value="F:lipid-A-disaccharide synthase activity"/>
    <property type="evidence" value="ECO:0007669"/>
    <property type="project" value="UniProtKB-UniRule"/>
</dbReference>
<dbReference type="GO" id="GO:0005543">
    <property type="term" value="F:phospholipid binding"/>
    <property type="evidence" value="ECO:0007669"/>
    <property type="project" value="TreeGrafter"/>
</dbReference>
<dbReference type="GO" id="GO:0009245">
    <property type="term" value="P:lipid A biosynthetic process"/>
    <property type="evidence" value="ECO:0007669"/>
    <property type="project" value="UniProtKB-UniRule"/>
</dbReference>
<dbReference type="CDD" id="cd01635">
    <property type="entry name" value="Glycosyltransferase_GTB-type"/>
    <property type="match status" value="1"/>
</dbReference>
<dbReference type="HAMAP" id="MF_00392">
    <property type="entry name" value="LpxB"/>
    <property type="match status" value="1"/>
</dbReference>
<dbReference type="InterPro" id="IPR003835">
    <property type="entry name" value="Glyco_trans_19"/>
</dbReference>
<dbReference type="NCBIfam" id="TIGR00215">
    <property type="entry name" value="lpxB"/>
    <property type="match status" value="1"/>
</dbReference>
<dbReference type="PANTHER" id="PTHR30372">
    <property type="entry name" value="LIPID-A-DISACCHARIDE SYNTHASE"/>
    <property type="match status" value="1"/>
</dbReference>
<dbReference type="PANTHER" id="PTHR30372:SF4">
    <property type="entry name" value="LIPID-A-DISACCHARIDE SYNTHASE, MITOCHONDRIAL-RELATED"/>
    <property type="match status" value="1"/>
</dbReference>
<dbReference type="Pfam" id="PF02684">
    <property type="entry name" value="LpxB"/>
    <property type="match status" value="1"/>
</dbReference>
<dbReference type="SUPFAM" id="SSF53756">
    <property type="entry name" value="UDP-Glycosyltransferase/glycogen phosphorylase"/>
    <property type="match status" value="1"/>
</dbReference>
<protein>
    <recommendedName>
        <fullName evidence="1">Lipid-A-disaccharide synthase</fullName>
        <ecNumber evidence="1">2.4.1.182</ecNumber>
    </recommendedName>
</protein>
<sequence>MDPAMQAPLRIAMVAGEASGDMLAALLIGGLQADWPGIELCGIGGPEMARRGFTPWWPSERLAVHGYSMQMLRRLRELLGIRRQLRRRLLAHRPALFIGIDAPDFNLGLEADLRAAGVKTVHFVCPSIWAWRAHRVGQIRRSADHVLCIFPFEPALLAQHGIAATYVGHPLAALIALQPDRAAARAQLGLRADDEVLAILPGSRASEIEYLARPFFQAAALLRQTRPALKLLVPAVLPLRERIVQAAQAAGMGEQVQIIAGQSHTVLAACDATLIASGTATLEAALFKRPMVIAYRMHPLNWSLMRRQQLQPWVGLPNILCREFVVPELLQDAATPQALCAATQHWLDARRQHPPTITALERRFTALHHSLQRNTPQLAADALRTILAH</sequence>
<proteinExistence type="inferred from homology"/>